<name>TGL_BACC0</name>
<dbReference type="EC" id="2.3.2.13" evidence="1"/>
<dbReference type="EMBL" id="CP001283">
    <property type="protein sequence ID" value="ACK92437.1"/>
    <property type="molecule type" value="Genomic_DNA"/>
</dbReference>
<dbReference type="RefSeq" id="WP_000635328.1">
    <property type="nucleotide sequence ID" value="NC_011773.1"/>
</dbReference>
<dbReference type="SMR" id="B7JKT7"/>
<dbReference type="KEGG" id="bcu:BCAH820_3978"/>
<dbReference type="HOGENOM" id="CLU_088922_0_0_9"/>
<dbReference type="Proteomes" id="UP000001363">
    <property type="component" value="Chromosome"/>
</dbReference>
<dbReference type="GO" id="GO:0003810">
    <property type="term" value="F:protein-glutamine gamma-glutamyltransferase activity"/>
    <property type="evidence" value="ECO:0007669"/>
    <property type="project" value="UniProtKB-UniRule"/>
</dbReference>
<dbReference type="GO" id="GO:0030435">
    <property type="term" value="P:sporulation resulting in formation of a cellular spore"/>
    <property type="evidence" value="ECO:0007669"/>
    <property type="project" value="UniProtKB-UniRule"/>
</dbReference>
<dbReference type="HAMAP" id="MF_00727">
    <property type="entry name" value="Tgl"/>
    <property type="match status" value="1"/>
</dbReference>
<dbReference type="InterPro" id="IPR020916">
    <property type="entry name" value="Gln_gamma-glutamylTfrase_bac"/>
</dbReference>
<dbReference type="NCBIfam" id="NF002869">
    <property type="entry name" value="PRK03187.1"/>
    <property type="match status" value="1"/>
</dbReference>
<dbReference type="Pfam" id="PF20085">
    <property type="entry name" value="TGL"/>
    <property type="match status" value="1"/>
</dbReference>
<reference key="1">
    <citation type="submission" date="2008-10" db="EMBL/GenBank/DDBJ databases">
        <title>Genome sequence of Bacillus cereus AH820.</title>
        <authorList>
            <person name="Dodson R.J."/>
            <person name="Durkin A.S."/>
            <person name="Rosovitz M.J."/>
            <person name="Rasko D.A."/>
            <person name="Hoffmaster A."/>
            <person name="Ravel J."/>
            <person name="Sutton G."/>
        </authorList>
    </citation>
    <scope>NUCLEOTIDE SEQUENCE [LARGE SCALE GENOMIC DNA]</scope>
    <source>
        <strain>AH820</strain>
    </source>
</reference>
<organism>
    <name type="scientific">Bacillus cereus (strain AH820)</name>
    <dbReference type="NCBI Taxonomy" id="405535"/>
    <lineage>
        <taxon>Bacteria</taxon>
        <taxon>Bacillati</taxon>
        <taxon>Bacillota</taxon>
        <taxon>Bacilli</taxon>
        <taxon>Bacillales</taxon>
        <taxon>Bacillaceae</taxon>
        <taxon>Bacillus</taxon>
        <taxon>Bacillus cereus group</taxon>
    </lineage>
</organism>
<protein>
    <recommendedName>
        <fullName evidence="1">Protein-glutamine gamma-glutamyltransferase</fullName>
        <ecNumber evidence="1">2.3.2.13</ecNumber>
    </recommendedName>
    <alternativeName>
        <fullName evidence="1">Transglutaminase</fullName>
        <shortName evidence="1">TGase</shortName>
    </alternativeName>
</protein>
<gene>
    <name evidence="1" type="primary">tgl</name>
    <name type="ordered locus">BCAH820_3978</name>
</gene>
<evidence type="ECO:0000255" key="1">
    <source>
        <dbReference type="HAMAP-Rule" id="MF_00727"/>
    </source>
</evidence>
<accession>B7JKT7</accession>
<sequence>MIVIGRSIVHPYITNEYEPFAAEKQQILSIMAGNQEIYSFRTSDELSFDLNLRVNIITSALELFQSGFQFRTFQQSFCNPQYWKRTSLGGFELLPNIPPSIAIQDIFKNGKLYGTECATAMIIIFYKALLSLYEKETFNRLFANLLLYTWDYDQDLKLITKTGGDLVPGDLVYFKNPQVNPATIEWQGENTIYLGNFFFYGHGVGVKTKEEIIYALNERRVPYAFISAFLTDTITRIDSRLMSYHASPNTPQTSIGFIPIRDDAIVATVGNTTTVY</sequence>
<comment type="function">
    <text evidence="1">Probably plays a role in the assembly of the spore coat proteins by catalyzing epsilon-(gamma-glutamyl)lysine cross-links.</text>
</comment>
<comment type="catalytic activity">
    <reaction evidence="1">
        <text>L-glutaminyl-[protein] + L-lysyl-[protein] = [protein]-L-lysyl-N(6)-5-L-glutamyl-[protein] + NH4(+)</text>
        <dbReference type="Rhea" id="RHEA:54816"/>
        <dbReference type="Rhea" id="RHEA-COMP:9752"/>
        <dbReference type="Rhea" id="RHEA-COMP:10207"/>
        <dbReference type="Rhea" id="RHEA-COMP:14005"/>
        <dbReference type="ChEBI" id="CHEBI:28938"/>
        <dbReference type="ChEBI" id="CHEBI:29969"/>
        <dbReference type="ChEBI" id="CHEBI:30011"/>
        <dbReference type="ChEBI" id="CHEBI:138370"/>
        <dbReference type="EC" id="2.3.2.13"/>
    </reaction>
</comment>
<comment type="similarity">
    <text evidence="1">Belongs to the bacillus TGase family.</text>
</comment>
<keyword id="KW-0012">Acyltransferase</keyword>
<keyword id="KW-0749">Sporulation</keyword>
<keyword id="KW-0808">Transferase</keyword>
<feature type="chain" id="PRO_1000197964" description="Protein-glutamine gamma-glutamyltransferase">
    <location>
        <begin position="1"/>
        <end position="276"/>
    </location>
</feature>
<proteinExistence type="inferred from homology"/>